<sequence>MWGLLLALAAFAPAVGPALGAPRNSVLGLAQPGTTKVPGSTPALHSSPAQPPAETANGTSEQHVRIRVIKKKKVIMKKRKKLTLTRPTPLVTAGPLVTPTPAGTLDPAEKQETGCPPLGLESLRVSDSRLEASSSQSFGLGPHRGRLNIQSGLEDGDLYDGAWCAEEQDADPWFQVDAGHPTRFSGVITQGRNSVWRYDWVTSYKVQFSNDSRTWWGSRNHSSGMDAVFPANSDPETPVLNLLPEPQVARFIRLLPQTWLQGGAPCLRAEILACPVSDPNDLFLEAPASGSSDPLDFQHHNYKAMRKLMKQVQEQCPNITRIYSIGKSYQGLKLYVMEMSDKPGEHELGEPEVRYVAGMHGNEALGRELLLLLMQFLCHEFLRGNPRVTRLLSEMRIHLLPSMNPDGYEIAYHRGSELVGWAEGRWNNQSIDLNHNFADLNTPLWEAQDDGKVPHIVPNHHLPLPTYYTLPNATVAPETRAVIKWMKRIPFVLSANLHGGELVVSYPFDMTRTPWAARELTPTPDDAVFRWLSTVYAGSNLAMQDTSRRPCHSQDFSVHGNIINGADWHTVPGSMNDFSYLHTNCFEVTVELSCDKFPHENELPQEWENNKDALLTYLEQVRMGIAGVVRDKDTELGIADAVIAVDGINHDVTTAWGGDYWRLLTPGDYMVTASAEGYHSVTRNCRVTFEEGPFPCNFVLTKTPKQRLRELLAAGAKVPPDLRRRLERLRGQKD</sequence>
<comment type="function">
    <text evidence="1">May be involved in cell-cell interactions. No carboxypeptidase activity was found yet (By similarity).</text>
</comment>
<comment type="cofactor">
    <cofactor evidence="1">
        <name>Zn(2+)</name>
        <dbReference type="ChEBI" id="CHEBI:29105"/>
    </cofactor>
    <text evidence="1">Binds 1 zinc ion per subunit.</text>
</comment>
<comment type="subcellular location">
    <subcellularLocation>
        <location evidence="1">Secreted</location>
    </subcellularLocation>
</comment>
<comment type="similarity">
    <text evidence="6">Belongs to the peptidase M14 family.</text>
</comment>
<organism>
    <name type="scientific">Homo sapiens</name>
    <name type="common">Human</name>
    <dbReference type="NCBI Taxonomy" id="9606"/>
    <lineage>
        <taxon>Eukaryota</taxon>
        <taxon>Metazoa</taxon>
        <taxon>Chordata</taxon>
        <taxon>Craniata</taxon>
        <taxon>Vertebrata</taxon>
        <taxon>Euteleostomi</taxon>
        <taxon>Mammalia</taxon>
        <taxon>Eutheria</taxon>
        <taxon>Euarchontoglires</taxon>
        <taxon>Primates</taxon>
        <taxon>Haplorrhini</taxon>
        <taxon>Catarrhini</taxon>
        <taxon>Hominidae</taxon>
        <taxon>Homo</taxon>
    </lineage>
</organism>
<proteinExistence type="evidence at protein level"/>
<reference key="1">
    <citation type="journal article" date="2004" name="Nat. Genet.">
        <title>Complete sequencing and characterization of 21,243 full-length human cDNAs.</title>
        <authorList>
            <person name="Ota T."/>
            <person name="Suzuki Y."/>
            <person name="Nishikawa T."/>
            <person name="Otsuki T."/>
            <person name="Sugiyama T."/>
            <person name="Irie R."/>
            <person name="Wakamatsu A."/>
            <person name="Hayashi K."/>
            <person name="Sato H."/>
            <person name="Nagai K."/>
            <person name="Kimura K."/>
            <person name="Makita H."/>
            <person name="Sekine M."/>
            <person name="Obayashi M."/>
            <person name="Nishi T."/>
            <person name="Shibahara T."/>
            <person name="Tanaka T."/>
            <person name="Ishii S."/>
            <person name="Yamamoto J."/>
            <person name="Saito K."/>
            <person name="Kawai Y."/>
            <person name="Isono Y."/>
            <person name="Nakamura Y."/>
            <person name="Nagahari K."/>
            <person name="Murakami K."/>
            <person name="Yasuda T."/>
            <person name="Iwayanagi T."/>
            <person name="Wagatsuma M."/>
            <person name="Shiratori A."/>
            <person name="Sudo H."/>
            <person name="Hosoiri T."/>
            <person name="Kaku Y."/>
            <person name="Kodaira H."/>
            <person name="Kondo H."/>
            <person name="Sugawara M."/>
            <person name="Takahashi M."/>
            <person name="Kanda K."/>
            <person name="Yokoi T."/>
            <person name="Furuya T."/>
            <person name="Kikkawa E."/>
            <person name="Omura Y."/>
            <person name="Abe K."/>
            <person name="Kamihara K."/>
            <person name="Katsuta N."/>
            <person name="Sato K."/>
            <person name="Tanikawa M."/>
            <person name="Yamazaki M."/>
            <person name="Ninomiya K."/>
            <person name="Ishibashi T."/>
            <person name="Yamashita H."/>
            <person name="Murakawa K."/>
            <person name="Fujimori K."/>
            <person name="Tanai H."/>
            <person name="Kimata M."/>
            <person name="Watanabe M."/>
            <person name="Hiraoka S."/>
            <person name="Chiba Y."/>
            <person name="Ishida S."/>
            <person name="Ono Y."/>
            <person name="Takiguchi S."/>
            <person name="Watanabe S."/>
            <person name="Yosida M."/>
            <person name="Hotuta T."/>
            <person name="Kusano J."/>
            <person name="Kanehori K."/>
            <person name="Takahashi-Fujii A."/>
            <person name="Hara H."/>
            <person name="Tanase T.-O."/>
            <person name="Nomura Y."/>
            <person name="Togiya S."/>
            <person name="Komai F."/>
            <person name="Hara R."/>
            <person name="Takeuchi K."/>
            <person name="Arita M."/>
            <person name="Imose N."/>
            <person name="Musashino K."/>
            <person name="Yuuki H."/>
            <person name="Oshima A."/>
            <person name="Sasaki N."/>
            <person name="Aotsuka S."/>
            <person name="Yoshikawa Y."/>
            <person name="Matsunawa H."/>
            <person name="Ichihara T."/>
            <person name="Shiohata N."/>
            <person name="Sano S."/>
            <person name="Moriya S."/>
            <person name="Momiyama H."/>
            <person name="Satoh N."/>
            <person name="Takami S."/>
            <person name="Terashima Y."/>
            <person name="Suzuki O."/>
            <person name="Nakagawa S."/>
            <person name="Senoh A."/>
            <person name="Mizoguchi H."/>
            <person name="Goto Y."/>
            <person name="Shimizu F."/>
            <person name="Wakebe H."/>
            <person name="Hishigaki H."/>
            <person name="Watanabe T."/>
            <person name="Sugiyama A."/>
            <person name="Takemoto M."/>
            <person name="Kawakami B."/>
            <person name="Yamazaki M."/>
            <person name="Watanabe K."/>
            <person name="Kumagai A."/>
            <person name="Itakura S."/>
            <person name="Fukuzumi Y."/>
            <person name="Fujimori Y."/>
            <person name="Komiyama M."/>
            <person name="Tashiro H."/>
            <person name="Tanigami A."/>
            <person name="Fujiwara T."/>
            <person name="Ono T."/>
            <person name="Yamada K."/>
            <person name="Fujii Y."/>
            <person name="Ozaki K."/>
            <person name="Hirao M."/>
            <person name="Ohmori Y."/>
            <person name="Kawabata A."/>
            <person name="Hikiji T."/>
            <person name="Kobatake N."/>
            <person name="Inagaki H."/>
            <person name="Ikema Y."/>
            <person name="Okamoto S."/>
            <person name="Okitani R."/>
            <person name="Kawakami T."/>
            <person name="Noguchi S."/>
            <person name="Itoh T."/>
            <person name="Shigeta K."/>
            <person name="Senba T."/>
            <person name="Matsumura K."/>
            <person name="Nakajima Y."/>
            <person name="Mizuno T."/>
            <person name="Morinaga M."/>
            <person name="Sasaki M."/>
            <person name="Togashi T."/>
            <person name="Oyama M."/>
            <person name="Hata H."/>
            <person name="Watanabe M."/>
            <person name="Komatsu T."/>
            <person name="Mizushima-Sugano J."/>
            <person name="Satoh T."/>
            <person name="Shirai Y."/>
            <person name="Takahashi Y."/>
            <person name="Nakagawa K."/>
            <person name="Okumura K."/>
            <person name="Nagase T."/>
            <person name="Nomura N."/>
            <person name="Kikuchi H."/>
            <person name="Masuho Y."/>
            <person name="Yamashita R."/>
            <person name="Nakai K."/>
            <person name="Yada T."/>
            <person name="Nakamura Y."/>
            <person name="Ohara O."/>
            <person name="Isogai T."/>
            <person name="Sugano S."/>
        </authorList>
    </citation>
    <scope>NUCLEOTIDE SEQUENCE [LARGE SCALE MRNA]</scope>
    <source>
        <tissue>Teratocarcinoma</tissue>
    </source>
</reference>
<reference key="2">
    <citation type="journal article" date="2003" name="Genome Res.">
        <title>The secreted protein discovery initiative (SPDI), a large-scale effort to identify novel human secreted and transmembrane proteins: a bioinformatics assessment.</title>
        <authorList>
            <person name="Clark H.F."/>
            <person name="Gurney A.L."/>
            <person name="Abaya E."/>
            <person name="Baker K."/>
            <person name="Baldwin D.T."/>
            <person name="Brush J."/>
            <person name="Chen J."/>
            <person name="Chow B."/>
            <person name="Chui C."/>
            <person name="Crowley C."/>
            <person name="Currell B."/>
            <person name="Deuel B."/>
            <person name="Dowd P."/>
            <person name="Eaton D."/>
            <person name="Foster J.S."/>
            <person name="Grimaldi C."/>
            <person name="Gu Q."/>
            <person name="Hass P.E."/>
            <person name="Heldens S."/>
            <person name="Huang A."/>
            <person name="Kim H.S."/>
            <person name="Klimowski L."/>
            <person name="Jin Y."/>
            <person name="Johnson S."/>
            <person name="Lee J."/>
            <person name="Lewis L."/>
            <person name="Liao D."/>
            <person name="Mark M.R."/>
            <person name="Robbie E."/>
            <person name="Sanchez C."/>
            <person name="Schoenfeld J."/>
            <person name="Seshagiri S."/>
            <person name="Simmons L."/>
            <person name="Singh J."/>
            <person name="Smith V."/>
            <person name="Stinson J."/>
            <person name="Vagts A."/>
            <person name="Vandlen R.L."/>
            <person name="Watanabe C."/>
            <person name="Wieand D."/>
            <person name="Woods K."/>
            <person name="Xie M.-H."/>
            <person name="Yansura D.G."/>
            <person name="Yi S."/>
            <person name="Yu G."/>
            <person name="Yuan J."/>
            <person name="Zhang M."/>
            <person name="Zhang Z."/>
            <person name="Goddard A.D."/>
            <person name="Wood W.I."/>
            <person name="Godowski P.J."/>
            <person name="Gray A.M."/>
        </authorList>
    </citation>
    <scope>NUCLEOTIDE SEQUENCE [LARGE SCALE MRNA]</scope>
</reference>
<reference key="3">
    <citation type="journal article" date="2001" name="Nature">
        <title>The DNA sequence and comparative analysis of human chromosome 20.</title>
        <authorList>
            <person name="Deloukas P."/>
            <person name="Matthews L.H."/>
            <person name="Ashurst J.L."/>
            <person name="Burton J."/>
            <person name="Gilbert J.G.R."/>
            <person name="Jones M."/>
            <person name="Stavrides G."/>
            <person name="Almeida J.P."/>
            <person name="Babbage A.K."/>
            <person name="Bagguley C.L."/>
            <person name="Bailey J."/>
            <person name="Barlow K.F."/>
            <person name="Bates K.N."/>
            <person name="Beard L.M."/>
            <person name="Beare D.M."/>
            <person name="Beasley O.P."/>
            <person name="Bird C.P."/>
            <person name="Blakey S.E."/>
            <person name="Bridgeman A.M."/>
            <person name="Brown A.J."/>
            <person name="Buck D."/>
            <person name="Burrill W.D."/>
            <person name="Butler A.P."/>
            <person name="Carder C."/>
            <person name="Carter N.P."/>
            <person name="Chapman J.C."/>
            <person name="Clamp M."/>
            <person name="Clark G."/>
            <person name="Clark L.N."/>
            <person name="Clark S.Y."/>
            <person name="Clee C.M."/>
            <person name="Clegg S."/>
            <person name="Cobley V.E."/>
            <person name="Collier R.E."/>
            <person name="Connor R.E."/>
            <person name="Corby N.R."/>
            <person name="Coulson A."/>
            <person name="Coville G.J."/>
            <person name="Deadman R."/>
            <person name="Dhami P.D."/>
            <person name="Dunn M."/>
            <person name="Ellington A.G."/>
            <person name="Frankland J.A."/>
            <person name="Fraser A."/>
            <person name="French L."/>
            <person name="Garner P."/>
            <person name="Grafham D.V."/>
            <person name="Griffiths C."/>
            <person name="Griffiths M.N.D."/>
            <person name="Gwilliam R."/>
            <person name="Hall R.E."/>
            <person name="Hammond S."/>
            <person name="Harley J.L."/>
            <person name="Heath P.D."/>
            <person name="Ho S."/>
            <person name="Holden J.L."/>
            <person name="Howden P.J."/>
            <person name="Huckle E."/>
            <person name="Hunt A.R."/>
            <person name="Hunt S.E."/>
            <person name="Jekosch K."/>
            <person name="Johnson C.M."/>
            <person name="Johnson D."/>
            <person name="Kay M.P."/>
            <person name="Kimberley A.M."/>
            <person name="King A."/>
            <person name="Knights A."/>
            <person name="Laird G.K."/>
            <person name="Lawlor S."/>
            <person name="Lehvaeslaiho M.H."/>
            <person name="Leversha M.A."/>
            <person name="Lloyd C."/>
            <person name="Lloyd D.M."/>
            <person name="Lovell J.D."/>
            <person name="Marsh V.L."/>
            <person name="Martin S.L."/>
            <person name="McConnachie L.J."/>
            <person name="McLay K."/>
            <person name="McMurray A.A."/>
            <person name="Milne S.A."/>
            <person name="Mistry D."/>
            <person name="Moore M.J.F."/>
            <person name="Mullikin J.C."/>
            <person name="Nickerson T."/>
            <person name="Oliver K."/>
            <person name="Parker A."/>
            <person name="Patel R."/>
            <person name="Pearce T.A.V."/>
            <person name="Peck A.I."/>
            <person name="Phillimore B.J.C.T."/>
            <person name="Prathalingam S.R."/>
            <person name="Plumb R.W."/>
            <person name="Ramsay H."/>
            <person name="Rice C.M."/>
            <person name="Ross M.T."/>
            <person name="Scott C.E."/>
            <person name="Sehra H.K."/>
            <person name="Shownkeen R."/>
            <person name="Sims S."/>
            <person name="Skuce C.D."/>
            <person name="Smith M.L."/>
            <person name="Soderlund C."/>
            <person name="Steward C.A."/>
            <person name="Sulston J.E."/>
            <person name="Swann R.M."/>
            <person name="Sycamore N."/>
            <person name="Taylor R."/>
            <person name="Tee L."/>
            <person name="Thomas D.W."/>
            <person name="Thorpe A."/>
            <person name="Tracey A."/>
            <person name="Tromans A.C."/>
            <person name="Vaudin M."/>
            <person name="Wall M."/>
            <person name="Wallis J.M."/>
            <person name="Whitehead S.L."/>
            <person name="Whittaker P."/>
            <person name="Willey D.L."/>
            <person name="Williams L."/>
            <person name="Williams S.A."/>
            <person name="Wilming L."/>
            <person name="Wray P.W."/>
            <person name="Hubbard T."/>
            <person name="Durbin R.M."/>
            <person name="Bentley D.R."/>
            <person name="Beck S."/>
            <person name="Rogers J."/>
        </authorList>
    </citation>
    <scope>NUCLEOTIDE SEQUENCE [LARGE SCALE GENOMIC DNA]</scope>
</reference>
<reference key="4">
    <citation type="journal article" date="2004" name="Genome Res.">
        <title>The status, quality, and expansion of the NIH full-length cDNA project: the Mammalian Gene Collection (MGC).</title>
        <authorList>
            <consortium name="The MGC Project Team"/>
        </authorList>
    </citation>
    <scope>NUCLEOTIDE SEQUENCE [LARGE SCALE MRNA]</scope>
    <source>
        <tissue>Fetal brain</tissue>
    </source>
</reference>
<protein>
    <recommendedName>
        <fullName>Probable carboxypeptidase X1</fullName>
        <ecNumber>3.4.17.-</ecNumber>
    </recommendedName>
    <alternativeName>
        <fullName>Metallocarboxypeptidase CPX-1</fullName>
    </alternativeName>
</protein>
<name>CPXM1_HUMAN</name>
<accession>Q96SM3</accession>
<accession>Q6P4G8</accession>
<accession>Q6UW65</accession>
<accession>Q9NUB5</accession>
<keyword id="KW-0121">Carboxypeptidase</keyword>
<keyword id="KW-1015">Disulfide bond</keyword>
<keyword id="KW-0325">Glycoprotein</keyword>
<keyword id="KW-0378">Hydrolase</keyword>
<keyword id="KW-0479">Metal-binding</keyword>
<keyword id="KW-0482">Metalloprotease</keyword>
<keyword id="KW-0645">Protease</keyword>
<keyword id="KW-1267">Proteomics identification</keyword>
<keyword id="KW-1185">Reference proteome</keyword>
<keyword id="KW-0964">Secreted</keyword>
<keyword id="KW-0732">Signal</keyword>
<keyword id="KW-0862">Zinc</keyword>
<feature type="signal peptide" evidence="2">
    <location>
        <begin position="1"/>
        <end position="20"/>
    </location>
</feature>
<feature type="chain" id="PRO_0000004407" description="Probable carboxypeptidase X1">
    <location>
        <begin position="21"/>
        <end position="734"/>
    </location>
</feature>
<feature type="domain" description="F5/8 type C" evidence="3">
    <location>
        <begin position="113"/>
        <end position="274"/>
    </location>
</feature>
<feature type="domain" description="Peptidase M14" evidence="4">
    <location>
        <begin position="298"/>
        <end position="621"/>
    </location>
</feature>
<feature type="region of interest" description="Disordered" evidence="5">
    <location>
        <begin position="30"/>
        <end position="62"/>
    </location>
</feature>
<feature type="compositionally biased region" description="Polar residues" evidence="5">
    <location>
        <begin position="32"/>
        <end position="48"/>
    </location>
</feature>
<feature type="active site" description="Proton donor/acceptor" evidence="4">
    <location>
        <position position="591"/>
    </location>
</feature>
<feature type="binding site" evidence="4">
    <location>
        <position position="360"/>
    </location>
    <ligand>
        <name>Zn(2+)</name>
        <dbReference type="ChEBI" id="CHEBI:29105"/>
        <note>catalytic</note>
    </ligand>
</feature>
<feature type="binding site" evidence="4">
    <location>
        <position position="363"/>
    </location>
    <ligand>
        <name>Zn(2+)</name>
        <dbReference type="ChEBI" id="CHEBI:29105"/>
        <note>catalytic</note>
    </ligand>
</feature>
<feature type="binding site" evidence="4">
    <location>
        <position position="498"/>
    </location>
    <ligand>
        <name>Zn(2+)</name>
        <dbReference type="ChEBI" id="CHEBI:29105"/>
        <note>catalytic</note>
    </ligand>
</feature>
<feature type="glycosylation site" description="N-linked (GlcNAc...) asparagine" evidence="2">
    <location>
        <position position="57"/>
    </location>
</feature>
<feature type="glycosylation site" description="N-linked (GlcNAc...) asparagine" evidence="2">
    <location>
        <position position="210"/>
    </location>
</feature>
<feature type="glycosylation site" description="N-linked (GlcNAc...) asparagine" evidence="2">
    <location>
        <position position="220"/>
    </location>
</feature>
<feature type="glycosylation site" description="N-linked (GlcNAc...) asparagine" evidence="2">
    <location>
        <position position="318"/>
    </location>
</feature>
<feature type="glycosylation site" description="N-linked (GlcNAc...) asparagine" evidence="2">
    <location>
        <position position="428"/>
    </location>
</feature>
<feature type="glycosylation site" description="N-linked (GlcNAc...) asparagine" evidence="2">
    <location>
        <position position="472"/>
    </location>
</feature>
<feature type="disulfide bond" evidence="3">
    <location>
        <begin position="115"/>
        <end position="274"/>
    </location>
</feature>
<feature type="sequence conflict" description="In Ref. 4; AAH63430." evidence="6" ref="4">
    <original>S</original>
    <variation>L</variation>
    <location>
        <position position="40"/>
    </location>
</feature>
<feature type="sequence conflict" description="In Ref. 2; AAQ89315." evidence="6" ref="2">
    <original>Q</original>
    <variation>H</variation>
    <location>
        <position position="150"/>
    </location>
</feature>
<feature type="sequence conflict" description="In Ref. 1; BAB55275." evidence="6" ref="1">
    <original>R</original>
    <variation>W</variation>
    <location>
        <position position="390"/>
    </location>
</feature>
<dbReference type="EC" id="3.4.17.-"/>
<dbReference type="EMBL" id="AK027661">
    <property type="protein sequence ID" value="BAB55275.1"/>
    <property type="molecule type" value="mRNA"/>
</dbReference>
<dbReference type="EMBL" id="AY358956">
    <property type="protein sequence ID" value="AAQ89315.1"/>
    <property type="molecule type" value="mRNA"/>
</dbReference>
<dbReference type="EMBL" id="AL035460">
    <property type="status" value="NOT_ANNOTATED_CDS"/>
    <property type="molecule type" value="Genomic_DNA"/>
</dbReference>
<dbReference type="EMBL" id="BC063430">
    <property type="protein sequence ID" value="AAH63430.1"/>
    <property type="molecule type" value="mRNA"/>
</dbReference>
<dbReference type="CCDS" id="CCDS13033.1"/>
<dbReference type="RefSeq" id="NP_001171628.1">
    <property type="nucleotide sequence ID" value="NM_001184699.1"/>
</dbReference>
<dbReference type="RefSeq" id="NP_062555.1">
    <property type="nucleotide sequence ID" value="NM_019609.5"/>
</dbReference>
<dbReference type="SMR" id="Q96SM3"/>
<dbReference type="BioGRID" id="121127">
    <property type="interactions" value="1"/>
</dbReference>
<dbReference type="FunCoup" id="Q96SM3">
    <property type="interactions" value="151"/>
</dbReference>
<dbReference type="IntAct" id="Q96SM3">
    <property type="interactions" value="1"/>
</dbReference>
<dbReference type="STRING" id="9606.ENSP00000369979"/>
<dbReference type="MEROPS" id="M14.039"/>
<dbReference type="GlyConnect" id="1626">
    <property type="glycosylation" value="2 N-Linked glycans (1 site)"/>
</dbReference>
<dbReference type="GlyCosmos" id="Q96SM3">
    <property type="glycosylation" value="8 sites, 3 glycans"/>
</dbReference>
<dbReference type="GlyGen" id="Q96SM3">
    <property type="glycosylation" value="9 sites, 20 N-linked glycans (3 sites), 2 O-linked glycans (2 sites)"/>
</dbReference>
<dbReference type="iPTMnet" id="Q96SM3"/>
<dbReference type="PhosphoSitePlus" id="Q96SM3"/>
<dbReference type="BioMuta" id="CPXM1"/>
<dbReference type="DMDM" id="62512151"/>
<dbReference type="jPOST" id="Q96SM3"/>
<dbReference type="MassIVE" id="Q96SM3"/>
<dbReference type="PaxDb" id="9606-ENSP00000369979"/>
<dbReference type="PeptideAtlas" id="Q96SM3"/>
<dbReference type="ProteomicsDB" id="78128"/>
<dbReference type="Antibodypedia" id="23301">
    <property type="antibodies" value="95 antibodies from 21 providers"/>
</dbReference>
<dbReference type="DNASU" id="56265"/>
<dbReference type="Ensembl" id="ENST00000380605.3">
    <property type="protein sequence ID" value="ENSP00000369979.2"/>
    <property type="gene ID" value="ENSG00000088882.8"/>
</dbReference>
<dbReference type="GeneID" id="56265"/>
<dbReference type="KEGG" id="hsa:56265"/>
<dbReference type="MANE-Select" id="ENST00000380605.3">
    <property type="protein sequence ID" value="ENSP00000369979.2"/>
    <property type="RefSeq nucleotide sequence ID" value="NM_019609.5"/>
    <property type="RefSeq protein sequence ID" value="NP_062555.1"/>
</dbReference>
<dbReference type="UCSC" id="uc002wgu.4">
    <property type="organism name" value="human"/>
</dbReference>
<dbReference type="AGR" id="HGNC:15771"/>
<dbReference type="CTD" id="56265"/>
<dbReference type="DisGeNET" id="56265"/>
<dbReference type="GeneCards" id="CPXM1"/>
<dbReference type="HGNC" id="HGNC:15771">
    <property type="gene designation" value="CPXM1"/>
</dbReference>
<dbReference type="HPA" id="ENSG00000088882">
    <property type="expression patterns" value="Tissue enhanced (ovary)"/>
</dbReference>
<dbReference type="MIM" id="609555">
    <property type="type" value="gene"/>
</dbReference>
<dbReference type="neXtProt" id="NX_Q96SM3"/>
<dbReference type="OpenTargets" id="ENSG00000088882"/>
<dbReference type="PharmGKB" id="PA162382779"/>
<dbReference type="VEuPathDB" id="HostDB:ENSG00000088882"/>
<dbReference type="eggNOG" id="KOG2649">
    <property type="taxonomic scope" value="Eukaryota"/>
</dbReference>
<dbReference type="GeneTree" id="ENSGT00940000156141"/>
<dbReference type="HOGENOM" id="CLU_006722_4_0_1"/>
<dbReference type="InParanoid" id="Q96SM3"/>
<dbReference type="OMA" id="TDRRPCH"/>
<dbReference type="OrthoDB" id="10249045at2759"/>
<dbReference type="PAN-GO" id="Q96SM3">
    <property type="GO annotations" value="4 GO annotations based on evolutionary models"/>
</dbReference>
<dbReference type="PhylomeDB" id="Q96SM3"/>
<dbReference type="TreeFam" id="TF315592"/>
<dbReference type="PathwayCommons" id="Q96SM3"/>
<dbReference type="SignaLink" id="Q96SM3"/>
<dbReference type="BioGRID-ORCS" id="56265">
    <property type="hits" value="10 hits in 1145 CRISPR screens"/>
</dbReference>
<dbReference type="ChiTaRS" id="CPXM1">
    <property type="organism name" value="human"/>
</dbReference>
<dbReference type="GeneWiki" id="CPXM1"/>
<dbReference type="GenomeRNAi" id="56265"/>
<dbReference type="Pharos" id="Q96SM3">
    <property type="development level" value="Tbio"/>
</dbReference>
<dbReference type="PRO" id="PR:Q96SM3"/>
<dbReference type="Proteomes" id="UP000005640">
    <property type="component" value="Chromosome 20"/>
</dbReference>
<dbReference type="RNAct" id="Q96SM3">
    <property type="molecule type" value="protein"/>
</dbReference>
<dbReference type="Bgee" id="ENSG00000088882">
    <property type="expression patterns" value="Expressed in decidua and 121 other cell types or tissues"/>
</dbReference>
<dbReference type="GO" id="GO:0005615">
    <property type="term" value="C:extracellular space"/>
    <property type="evidence" value="ECO:0000318"/>
    <property type="project" value="GO_Central"/>
</dbReference>
<dbReference type="GO" id="GO:0004181">
    <property type="term" value="F:metallocarboxypeptidase activity"/>
    <property type="evidence" value="ECO:0007669"/>
    <property type="project" value="InterPro"/>
</dbReference>
<dbReference type="GO" id="GO:0008270">
    <property type="term" value="F:zinc ion binding"/>
    <property type="evidence" value="ECO:0007669"/>
    <property type="project" value="InterPro"/>
</dbReference>
<dbReference type="GO" id="GO:0006508">
    <property type="term" value="P:proteolysis"/>
    <property type="evidence" value="ECO:0007669"/>
    <property type="project" value="UniProtKB-KW"/>
</dbReference>
<dbReference type="CDD" id="cd00057">
    <property type="entry name" value="FA58C"/>
    <property type="match status" value="1"/>
</dbReference>
<dbReference type="CDD" id="cd03869">
    <property type="entry name" value="M14_CPX_like"/>
    <property type="match status" value="1"/>
</dbReference>
<dbReference type="CDD" id="cd11308">
    <property type="entry name" value="Peptidase_M14NE-CP-C_like"/>
    <property type="match status" value="1"/>
</dbReference>
<dbReference type="FunFam" id="3.40.630.10:FF:000007">
    <property type="entry name" value="Carboxypeptidase X (M14 family), member 1"/>
    <property type="match status" value="1"/>
</dbReference>
<dbReference type="FunFam" id="2.60.120.260:FF:000035">
    <property type="entry name" value="probable carboxypeptidase X1 isoform X2"/>
    <property type="match status" value="1"/>
</dbReference>
<dbReference type="FunFam" id="2.60.40.1120:FF:000012">
    <property type="entry name" value="probable carboxypeptidase X1 isoform X2"/>
    <property type="match status" value="1"/>
</dbReference>
<dbReference type="Gene3D" id="2.60.40.1120">
    <property type="entry name" value="Carboxypeptidase-like, regulatory domain"/>
    <property type="match status" value="1"/>
</dbReference>
<dbReference type="Gene3D" id="2.60.120.260">
    <property type="entry name" value="Galactose-binding domain-like"/>
    <property type="match status" value="1"/>
</dbReference>
<dbReference type="Gene3D" id="3.40.630.10">
    <property type="entry name" value="Zn peptidases"/>
    <property type="match status" value="1"/>
</dbReference>
<dbReference type="InterPro" id="IPR008969">
    <property type="entry name" value="CarboxyPept-like_regulatory"/>
</dbReference>
<dbReference type="InterPro" id="IPR000421">
    <property type="entry name" value="FA58C"/>
</dbReference>
<dbReference type="InterPro" id="IPR008979">
    <property type="entry name" value="Galactose-bd-like_sf"/>
</dbReference>
<dbReference type="InterPro" id="IPR000834">
    <property type="entry name" value="Peptidase_M14"/>
</dbReference>
<dbReference type="InterPro" id="IPR050753">
    <property type="entry name" value="Peptidase_M14_domain"/>
</dbReference>
<dbReference type="PANTHER" id="PTHR11532:SF43">
    <property type="entry name" value="CARBOXYPEPTIDASE X1-RELATED"/>
    <property type="match status" value="1"/>
</dbReference>
<dbReference type="PANTHER" id="PTHR11532">
    <property type="entry name" value="PROTEASE M14 CARBOXYPEPTIDASE"/>
    <property type="match status" value="1"/>
</dbReference>
<dbReference type="Pfam" id="PF13620">
    <property type="entry name" value="CarboxypepD_reg"/>
    <property type="match status" value="1"/>
</dbReference>
<dbReference type="Pfam" id="PF00754">
    <property type="entry name" value="F5_F8_type_C"/>
    <property type="match status" value="1"/>
</dbReference>
<dbReference type="Pfam" id="PF00246">
    <property type="entry name" value="Peptidase_M14"/>
    <property type="match status" value="1"/>
</dbReference>
<dbReference type="PRINTS" id="PR00765">
    <property type="entry name" value="CRBOXYPTASEA"/>
</dbReference>
<dbReference type="SMART" id="SM00231">
    <property type="entry name" value="FA58C"/>
    <property type="match status" value="1"/>
</dbReference>
<dbReference type="SMART" id="SM00631">
    <property type="entry name" value="Zn_pept"/>
    <property type="match status" value="1"/>
</dbReference>
<dbReference type="SUPFAM" id="SSF49464">
    <property type="entry name" value="Carboxypeptidase regulatory domain-like"/>
    <property type="match status" value="1"/>
</dbReference>
<dbReference type="SUPFAM" id="SSF49785">
    <property type="entry name" value="Galactose-binding domain-like"/>
    <property type="match status" value="1"/>
</dbReference>
<dbReference type="SUPFAM" id="SSF53187">
    <property type="entry name" value="Zn-dependent exopeptidases"/>
    <property type="match status" value="1"/>
</dbReference>
<dbReference type="PROSITE" id="PS00132">
    <property type="entry name" value="CARBOXYPEPT_ZN_1"/>
    <property type="match status" value="1"/>
</dbReference>
<dbReference type="PROSITE" id="PS00133">
    <property type="entry name" value="CARBOXYPEPT_ZN_2"/>
    <property type="match status" value="1"/>
</dbReference>
<dbReference type="PROSITE" id="PS50022">
    <property type="entry name" value="FA58C_3"/>
    <property type="match status" value="1"/>
</dbReference>
<dbReference type="PROSITE" id="PS52035">
    <property type="entry name" value="PEPTIDASE_M14"/>
    <property type="match status" value="1"/>
</dbReference>
<evidence type="ECO:0000250" key="1"/>
<evidence type="ECO:0000255" key="2"/>
<evidence type="ECO:0000255" key="3">
    <source>
        <dbReference type="PROSITE-ProRule" id="PRU00081"/>
    </source>
</evidence>
<evidence type="ECO:0000255" key="4">
    <source>
        <dbReference type="PROSITE-ProRule" id="PRU01379"/>
    </source>
</evidence>
<evidence type="ECO:0000256" key="5">
    <source>
        <dbReference type="SAM" id="MobiDB-lite"/>
    </source>
</evidence>
<evidence type="ECO:0000305" key="6"/>
<gene>
    <name type="primary">CPXM1</name>
    <name type="synonym">CPX1</name>
    <name type="synonym">CPXM</name>
    <name type="ORF">UNQ3015/PRO9782</name>
</gene>